<protein>
    <recommendedName>
        <fullName evidence="1">Probable dual-specificity RNA methyltransferase RlmN</fullName>
        <ecNumber evidence="1">2.1.1.192</ecNumber>
    </recommendedName>
    <alternativeName>
        <fullName evidence="1">23S rRNA (adenine(2503)-C(2))-methyltransferase</fullName>
    </alternativeName>
    <alternativeName>
        <fullName evidence="1">23S rRNA m2A2503 methyltransferase</fullName>
    </alternativeName>
    <alternativeName>
        <fullName evidence="1">Ribosomal RNA large subunit methyltransferase N</fullName>
    </alternativeName>
    <alternativeName>
        <fullName evidence="1">tRNA (adenine(37)-C(2))-methyltransferase</fullName>
    </alternativeName>
    <alternativeName>
        <fullName evidence="1">tRNA m2A37 methyltransferase</fullName>
    </alternativeName>
</protein>
<evidence type="ECO:0000255" key="1">
    <source>
        <dbReference type="HAMAP-Rule" id="MF_01849"/>
    </source>
</evidence>
<evidence type="ECO:0000255" key="2">
    <source>
        <dbReference type="PROSITE-ProRule" id="PRU01266"/>
    </source>
</evidence>
<name>RLMN_LISIN</name>
<feature type="chain" id="PRO_0000350238" description="Probable dual-specificity RNA methyltransferase RlmN">
    <location>
        <begin position="1"/>
        <end position="367"/>
    </location>
</feature>
<feature type="domain" description="Radical SAM core" evidence="2">
    <location>
        <begin position="98"/>
        <end position="326"/>
    </location>
</feature>
<feature type="active site" description="Proton acceptor" evidence="1">
    <location>
        <position position="92"/>
    </location>
</feature>
<feature type="active site" description="S-methylcysteine intermediate" evidence="1">
    <location>
        <position position="341"/>
    </location>
</feature>
<feature type="binding site" evidence="1">
    <location>
        <position position="112"/>
    </location>
    <ligand>
        <name>[4Fe-4S] cluster</name>
        <dbReference type="ChEBI" id="CHEBI:49883"/>
        <note>4Fe-4S-S-AdoMet</note>
    </ligand>
</feature>
<feature type="binding site" evidence="1">
    <location>
        <position position="116"/>
    </location>
    <ligand>
        <name>[4Fe-4S] cluster</name>
        <dbReference type="ChEBI" id="CHEBI:49883"/>
        <note>4Fe-4S-S-AdoMet</note>
    </ligand>
</feature>
<feature type="binding site" evidence="1">
    <location>
        <position position="119"/>
    </location>
    <ligand>
        <name>[4Fe-4S] cluster</name>
        <dbReference type="ChEBI" id="CHEBI:49883"/>
        <note>4Fe-4S-S-AdoMet</note>
    </ligand>
</feature>
<feature type="binding site" evidence="1">
    <location>
        <begin position="164"/>
        <end position="165"/>
    </location>
    <ligand>
        <name>S-adenosyl-L-methionine</name>
        <dbReference type="ChEBI" id="CHEBI:59789"/>
    </ligand>
</feature>
<feature type="binding site" evidence="1">
    <location>
        <position position="196"/>
    </location>
    <ligand>
        <name>S-adenosyl-L-methionine</name>
        <dbReference type="ChEBI" id="CHEBI:59789"/>
    </ligand>
</feature>
<feature type="binding site" evidence="1">
    <location>
        <begin position="219"/>
        <end position="221"/>
    </location>
    <ligand>
        <name>S-adenosyl-L-methionine</name>
        <dbReference type="ChEBI" id="CHEBI:59789"/>
    </ligand>
</feature>
<feature type="binding site" evidence="1">
    <location>
        <position position="297"/>
    </location>
    <ligand>
        <name>S-adenosyl-L-methionine</name>
        <dbReference type="ChEBI" id="CHEBI:59789"/>
    </ligand>
</feature>
<feature type="disulfide bond" description="(transient)" evidence="1">
    <location>
        <begin position="105"/>
        <end position="341"/>
    </location>
</feature>
<dbReference type="EC" id="2.1.1.192" evidence="1"/>
<dbReference type="EMBL" id="AL596165">
    <property type="protein sequence ID" value="CAC95716.1"/>
    <property type="molecule type" value="Genomic_DNA"/>
</dbReference>
<dbReference type="PIR" id="AD1493">
    <property type="entry name" value="AD1493"/>
</dbReference>
<dbReference type="RefSeq" id="WP_003725208.1">
    <property type="nucleotide sequence ID" value="NC_003212.1"/>
</dbReference>
<dbReference type="SMR" id="Q92EH6"/>
<dbReference type="STRING" id="272626.gene:17564810"/>
<dbReference type="GeneID" id="93233932"/>
<dbReference type="KEGG" id="lin:lin0484"/>
<dbReference type="eggNOG" id="COG0820">
    <property type="taxonomic scope" value="Bacteria"/>
</dbReference>
<dbReference type="HOGENOM" id="CLU_029101_0_1_9"/>
<dbReference type="OrthoDB" id="9793973at2"/>
<dbReference type="Proteomes" id="UP000002513">
    <property type="component" value="Chromosome"/>
</dbReference>
<dbReference type="GO" id="GO:0005737">
    <property type="term" value="C:cytoplasm"/>
    <property type="evidence" value="ECO:0007669"/>
    <property type="project" value="UniProtKB-SubCell"/>
</dbReference>
<dbReference type="GO" id="GO:0051539">
    <property type="term" value="F:4 iron, 4 sulfur cluster binding"/>
    <property type="evidence" value="ECO:0007669"/>
    <property type="project" value="UniProtKB-UniRule"/>
</dbReference>
<dbReference type="GO" id="GO:0046872">
    <property type="term" value="F:metal ion binding"/>
    <property type="evidence" value="ECO:0007669"/>
    <property type="project" value="UniProtKB-KW"/>
</dbReference>
<dbReference type="GO" id="GO:0070040">
    <property type="term" value="F:rRNA (adenine(2503)-C2-)-methyltransferase activity"/>
    <property type="evidence" value="ECO:0007669"/>
    <property type="project" value="UniProtKB-UniRule"/>
</dbReference>
<dbReference type="GO" id="GO:0019843">
    <property type="term" value="F:rRNA binding"/>
    <property type="evidence" value="ECO:0007669"/>
    <property type="project" value="UniProtKB-UniRule"/>
</dbReference>
<dbReference type="GO" id="GO:0002935">
    <property type="term" value="F:tRNA (adenine(37)-C2)-methyltransferase activity"/>
    <property type="evidence" value="ECO:0007669"/>
    <property type="project" value="UniProtKB-UniRule"/>
</dbReference>
<dbReference type="GO" id="GO:0000049">
    <property type="term" value="F:tRNA binding"/>
    <property type="evidence" value="ECO:0007669"/>
    <property type="project" value="UniProtKB-UniRule"/>
</dbReference>
<dbReference type="GO" id="GO:0070475">
    <property type="term" value="P:rRNA base methylation"/>
    <property type="evidence" value="ECO:0007669"/>
    <property type="project" value="UniProtKB-UniRule"/>
</dbReference>
<dbReference type="GO" id="GO:0030488">
    <property type="term" value="P:tRNA methylation"/>
    <property type="evidence" value="ECO:0007669"/>
    <property type="project" value="UniProtKB-UniRule"/>
</dbReference>
<dbReference type="CDD" id="cd01335">
    <property type="entry name" value="Radical_SAM"/>
    <property type="match status" value="1"/>
</dbReference>
<dbReference type="FunFam" id="3.20.20.70:FF:000014">
    <property type="entry name" value="Probable dual-specificity RNA methyltransferase RlmN"/>
    <property type="match status" value="1"/>
</dbReference>
<dbReference type="Gene3D" id="1.10.150.530">
    <property type="match status" value="1"/>
</dbReference>
<dbReference type="Gene3D" id="3.20.20.70">
    <property type="entry name" value="Aldolase class I"/>
    <property type="match status" value="1"/>
</dbReference>
<dbReference type="HAMAP" id="MF_01849">
    <property type="entry name" value="RNA_methyltr_RlmN"/>
    <property type="match status" value="1"/>
</dbReference>
<dbReference type="InterPro" id="IPR013785">
    <property type="entry name" value="Aldolase_TIM"/>
</dbReference>
<dbReference type="InterPro" id="IPR040072">
    <property type="entry name" value="Methyltransferase_A"/>
</dbReference>
<dbReference type="InterPro" id="IPR048641">
    <property type="entry name" value="RlmN_N"/>
</dbReference>
<dbReference type="InterPro" id="IPR027492">
    <property type="entry name" value="RNA_MTrfase_RlmN"/>
</dbReference>
<dbReference type="InterPro" id="IPR004383">
    <property type="entry name" value="rRNA_lsu_MTrfase_RlmN/Cfr"/>
</dbReference>
<dbReference type="InterPro" id="IPR007197">
    <property type="entry name" value="rSAM"/>
</dbReference>
<dbReference type="NCBIfam" id="TIGR00048">
    <property type="entry name" value="rRNA_mod_RlmN"/>
    <property type="match status" value="1"/>
</dbReference>
<dbReference type="PANTHER" id="PTHR30544">
    <property type="entry name" value="23S RRNA METHYLTRANSFERASE"/>
    <property type="match status" value="1"/>
</dbReference>
<dbReference type="PANTHER" id="PTHR30544:SF5">
    <property type="entry name" value="RADICAL SAM CORE DOMAIN-CONTAINING PROTEIN"/>
    <property type="match status" value="1"/>
</dbReference>
<dbReference type="Pfam" id="PF04055">
    <property type="entry name" value="Radical_SAM"/>
    <property type="match status" value="1"/>
</dbReference>
<dbReference type="Pfam" id="PF21016">
    <property type="entry name" value="RlmN_N"/>
    <property type="match status" value="1"/>
</dbReference>
<dbReference type="PIRSF" id="PIRSF006004">
    <property type="entry name" value="CHP00048"/>
    <property type="match status" value="1"/>
</dbReference>
<dbReference type="SFLD" id="SFLDF00275">
    <property type="entry name" value="adenosine_C2_methyltransferase"/>
    <property type="match status" value="1"/>
</dbReference>
<dbReference type="SFLD" id="SFLDG01062">
    <property type="entry name" value="methyltransferase_(Class_A)"/>
    <property type="match status" value="1"/>
</dbReference>
<dbReference type="SUPFAM" id="SSF102114">
    <property type="entry name" value="Radical SAM enzymes"/>
    <property type="match status" value="1"/>
</dbReference>
<dbReference type="PROSITE" id="PS51918">
    <property type="entry name" value="RADICAL_SAM"/>
    <property type="match status" value="1"/>
</dbReference>
<keyword id="KW-0004">4Fe-4S</keyword>
<keyword id="KW-0963">Cytoplasm</keyword>
<keyword id="KW-1015">Disulfide bond</keyword>
<keyword id="KW-0408">Iron</keyword>
<keyword id="KW-0411">Iron-sulfur</keyword>
<keyword id="KW-0479">Metal-binding</keyword>
<keyword id="KW-0489">Methyltransferase</keyword>
<keyword id="KW-0698">rRNA processing</keyword>
<keyword id="KW-0949">S-adenosyl-L-methionine</keyword>
<keyword id="KW-0808">Transferase</keyword>
<keyword id="KW-0819">tRNA processing</keyword>
<reference key="1">
    <citation type="journal article" date="2001" name="Science">
        <title>Comparative genomics of Listeria species.</title>
        <authorList>
            <person name="Glaser P."/>
            <person name="Frangeul L."/>
            <person name="Buchrieser C."/>
            <person name="Rusniok C."/>
            <person name="Amend A."/>
            <person name="Baquero F."/>
            <person name="Berche P."/>
            <person name="Bloecker H."/>
            <person name="Brandt P."/>
            <person name="Chakraborty T."/>
            <person name="Charbit A."/>
            <person name="Chetouani F."/>
            <person name="Couve E."/>
            <person name="de Daruvar A."/>
            <person name="Dehoux P."/>
            <person name="Domann E."/>
            <person name="Dominguez-Bernal G."/>
            <person name="Duchaud E."/>
            <person name="Durant L."/>
            <person name="Dussurget O."/>
            <person name="Entian K.-D."/>
            <person name="Fsihi H."/>
            <person name="Garcia-del Portillo F."/>
            <person name="Garrido P."/>
            <person name="Gautier L."/>
            <person name="Goebel W."/>
            <person name="Gomez-Lopez N."/>
            <person name="Hain T."/>
            <person name="Hauf J."/>
            <person name="Jackson D."/>
            <person name="Jones L.-M."/>
            <person name="Kaerst U."/>
            <person name="Kreft J."/>
            <person name="Kuhn M."/>
            <person name="Kunst F."/>
            <person name="Kurapkat G."/>
            <person name="Madueno E."/>
            <person name="Maitournam A."/>
            <person name="Mata Vicente J."/>
            <person name="Ng E."/>
            <person name="Nedjari H."/>
            <person name="Nordsiek G."/>
            <person name="Novella S."/>
            <person name="de Pablos B."/>
            <person name="Perez-Diaz J.-C."/>
            <person name="Purcell R."/>
            <person name="Remmel B."/>
            <person name="Rose M."/>
            <person name="Schlueter T."/>
            <person name="Simoes N."/>
            <person name="Tierrez A."/>
            <person name="Vazquez-Boland J.-A."/>
            <person name="Voss H."/>
            <person name="Wehland J."/>
            <person name="Cossart P."/>
        </authorList>
    </citation>
    <scope>NUCLEOTIDE SEQUENCE [LARGE SCALE GENOMIC DNA]</scope>
    <source>
        <strain>ATCC BAA-680 / CLIP 11262</strain>
    </source>
</reference>
<organism>
    <name type="scientific">Listeria innocua serovar 6a (strain ATCC BAA-680 / CLIP 11262)</name>
    <dbReference type="NCBI Taxonomy" id="272626"/>
    <lineage>
        <taxon>Bacteria</taxon>
        <taxon>Bacillati</taxon>
        <taxon>Bacillota</taxon>
        <taxon>Bacilli</taxon>
        <taxon>Bacillales</taxon>
        <taxon>Listeriaceae</taxon>
        <taxon>Listeria</taxon>
    </lineage>
</organism>
<gene>
    <name evidence="1" type="primary">rlmN</name>
    <name type="ordered locus">lin0484</name>
</gene>
<sequence>MEKSSIYGLTWTKLTEWLEAHGQKKFRATQVWDWLYRKRVKTFEEMSNVPKETIELLTANFVMNTLEEQVVQESTDGTTKYLFKLSDGNLIETVMMKQEYGLSVCVTTQVGCNIGCTFCASGLLKKSRDLTAGEIVEQIMNVQHYLDGRNLEERVSHVVVMGIGEPFDNYDNVMDFLRVINHDKGLAIGARHITVSTSGLAPRIIDFANEDFQVNLAISLHAPNNELRTSIMRINKTYSIEKLMEAIHYYVNKTNRRITFEYIMLKGVNDHKKEALELAALLGEHRHLAYVNLIPYNPVDEHIDYERSTKEDVLAFYDTLKKNGINCVIRREHGTDIDAACGQLRSKQIKRVGVRERMKQKQAAAEE</sequence>
<comment type="function">
    <text evidence="1">Specifically methylates position 2 of adenine 2503 in 23S rRNA and position 2 of adenine 37 in tRNAs.</text>
</comment>
<comment type="catalytic activity">
    <reaction evidence="1">
        <text>adenosine(2503) in 23S rRNA + 2 reduced [2Fe-2S]-[ferredoxin] + 2 S-adenosyl-L-methionine = 2-methyladenosine(2503) in 23S rRNA + 5'-deoxyadenosine + L-methionine + 2 oxidized [2Fe-2S]-[ferredoxin] + S-adenosyl-L-homocysteine</text>
        <dbReference type="Rhea" id="RHEA:42916"/>
        <dbReference type="Rhea" id="RHEA-COMP:10000"/>
        <dbReference type="Rhea" id="RHEA-COMP:10001"/>
        <dbReference type="Rhea" id="RHEA-COMP:10152"/>
        <dbReference type="Rhea" id="RHEA-COMP:10282"/>
        <dbReference type="ChEBI" id="CHEBI:17319"/>
        <dbReference type="ChEBI" id="CHEBI:33737"/>
        <dbReference type="ChEBI" id="CHEBI:33738"/>
        <dbReference type="ChEBI" id="CHEBI:57844"/>
        <dbReference type="ChEBI" id="CHEBI:57856"/>
        <dbReference type="ChEBI" id="CHEBI:59789"/>
        <dbReference type="ChEBI" id="CHEBI:74411"/>
        <dbReference type="ChEBI" id="CHEBI:74497"/>
        <dbReference type="EC" id="2.1.1.192"/>
    </reaction>
</comment>
<comment type="catalytic activity">
    <reaction evidence="1">
        <text>adenosine(37) in tRNA + 2 reduced [2Fe-2S]-[ferredoxin] + 2 S-adenosyl-L-methionine = 2-methyladenosine(37) in tRNA + 5'-deoxyadenosine + L-methionine + 2 oxidized [2Fe-2S]-[ferredoxin] + S-adenosyl-L-homocysteine</text>
        <dbReference type="Rhea" id="RHEA:43332"/>
        <dbReference type="Rhea" id="RHEA-COMP:10000"/>
        <dbReference type="Rhea" id="RHEA-COMP:10001"/>
        <dbReference type="Rhea" id="RHEA-COMP:10162"/>
        <dbReference type="Rhea" id="RHEA-COMP:10485"/>
        <dbReference type="ChEBI" id="CHEBI:17319"/>
        <dbReference type="ChEBI" id="CHEBI:33737"/>
        <dbReference type="ChEBI" id="CHEBI:33738"/>
        <dbReference type="ChEBI" id="CHEBI:57844"/>
        <dbReference type="ChEBI" id="CHEBI:57856"/>
        <dbReference type="ChEBI" id="CHEBI:59789"/>
        <dbReference type="ChEBI" id="CHEBI:74411"/>
        <dbReference type="ChEBI" id="CHEBI:74497"/>
        <dbReference type="EC" id="2.1.1.192"/>
    </reaction>
</comment>
<comment type="cofactor">
    <cofactor evidence="1">
        <name>[4Fe-4S] cluster</name>
        <dbReference type="ChEBI" id="CHEBI:49883"/>
    </cofactor>
    <text evidence="1">Binds 1 [4Fe-4S] cluster. The cluster is coordinated with 3 cysteines and an exchangeable S-adenosyl-L-methionine.</text>
</comment>
<comment type="subcellular location">
    <subcellularLocation>
        <location evidence="1">Cytoplasm</location>
    </subcellularLocation>
</comment>
<comment type="miscellaneous">
    <text evidence="1">Reaction proceeds by a ping-pong mechanism involving intermediate methylation of a conserved cysteine residue.</text>
</comment>
<comment type="similarity">
    <text evidence="1">Belongs to the radical SAM superfamily. RlmN family.</text>
</comment>
<accession>Q92EH6</accession>
<proteinExistence type="inferred from homology"/>